<reference key="1">
    <citation type="journal article" date="1989" name="Biol. Chem. Hoppe-Seyler">
        <title>Amino-acid sequences and functional differentiation of hemoglobins A and D from swift (Apus apus, Apodiformes).</title>
        <authorList>
            <person name="Nothum R."/>
            <person name="Weber R.E."/>
            <person name="Kosters J."/>
            <person name="Schneeganss D."/>
            <person name="Braunitzer G."/>
        </authorList>
    </citation>
    <scope>PROTEIN SEQUENCE OF 2-142</scope>
</reference>
<comment type="function">
    <text>Involved in oxygen transport from the lung to the various peripheral tissues.</text>
</comment>
<comment type="subunit">
    <text>Heterotetramer of two alpha chains and two beta chains.</text>
</comment>
<comment type="tissue specificity">
    <text>Red blood cells.</text>
</comment>
<comment type="similarity">
    <text evidence="2">Belongs to the globin family.</text>
</comment>
<gene>
    <name type="primary">HBAA</name>
</gene>
<organism>
    <name type="scientific">Apus apus</name>
    <name type="common">Common swift</name>
    <dbReference type="NCBI Taxonomy" id="8895"/>
    <lineage>
        <taxon>Eukaryota</taxon>
        <taxon>Metazoa</taxon>
        <taxon>Chordata</taxon>
        <taxon>Craniata</taxon>
        <taxon>Vertebrata</taxon>
        <taxon>Euteleostomi</taxon>
        <taxon>Archelosauria</taxon>
        <taxon>Archosauria</taxon>
        <taxon>Dinosauria</taxon>
        <taxon>Saurischia</taxon>
        <taxon>Theropoda</taxon>
        <taxon>Coelurosauria</taxon>
        <taxon>Aves</taxon>
        <taxon>Neognathae</taxon>
        <taxon>Neoaves</taxon>
        <taxon>Strisores</taxon>
        <taxon>Apodiformes</taxon>
        <taxon>Apodidae</taxon>
        <taxon>Apodinae</taxon>
        <taxon>Apus</taxon>
    </lineage>
</organism>
<proteinExistence type="evidence at protein level"/>
<protein>
    <recommendedName>
        <fullName>Hemoglobin subunit alpha-A</fullName>
    </recommendedName>
    <alternativeName>
        <fullName>Alpha-A-globin</fullName>
    </alternativeName>
    <alternativeName>
        <fullName>Hemoglobin alpha-A chain</fullName>
    </alternativeName>
</protein>
<evidence type="ECO:0000250" key="1"/>
<evidence type="ECO:0000255" key="2">
    <source>
        <dbReference type="PROSITE-ProRule" id="PRU00238"/>
    </source>
</evidence>
<sequence length="142" mass="15018">MVLSAADKTNVKGVFAKIGGQAEALGGEALARMFAAYPPTKTYFPHFDLSPGSAQVKAHGKKVASALVEAANNIDDIAGALSKLSDLHAQKLRVDPVNFKLLGHCFLVVVAIHHPSVLTPEVHASLDKFLCAVATVLTAKYR</sequence>
<name>HBA_APUAP</name>
<dbReference type="PIR" id="S07479">
    <property type="entry name" value="HASIA"/>
</dbReference>
<dbReference type="SMR" id="P15162"/>
<dbReference type="GO" id="GO:0072562">
    <property type="term" value="C:blood microparticle"/>
    <property type="evidence" value="ECO:0007669"/>
    <property type="project" value="TreeGrafter"/>
</dbReference>
<dbReference type="GO" id="GO:0031838">
    <property type="term" value="C:haptoglobin-hemoglobin complex"/>
    <property type="evidence" value="ECO:0007669"/>
    <property type="project" value="TreeGrafter"/>
</dbReference>
<dbReference type="GO" id="GO:0005833">
    <property type="term" value="C:hemoglobin complex"/>
    <property type="evidence" value="ECO:0007669"/>
    <property type="project" value="InterPro"/>
</dbReference>
<dbReference type="GO" id="GO:0031720">
    <property type="term" value="F:haptoglobin binding"/>
    <property type="evidence" value="ECO:0007669"/>
    <property type="project" value="TreeGrafter"/>
</dbReference>
<dbReference type="GO" id="GO:0020037">
    <property type="term" value="F:heme binding"/>
    <property type="evidence" value="ECO:0007669"/>
    <property type="project" value="InterPro"/>
</dbReference>
<dbReference type="GO" id="GO:0005506">
    <property type="term" value="F:iron ion binding"/>
    <property type="evidence" value="ECO:0007669"/>
    <property type="project" value="InterPro"/>
</dbReference>
<dbReference type="GO" id="GO:0043177">
    <property type="term" value="F:organic acid binding"/>
    <property type="evidence" value="ECO:0007669"/>
    <property type="project" value="TreeGrafter"/>
</dbReference>
<dbReference type="GO" id="GO:0019825">
    <property type="term" value="F:oxygen binding"/>
    <property type="evidence" value="ECO:0007669"/>
    <property type="project" value="InterPro"/>
</dbReference>
<dbReference type="GO" id="GO:0005344">
    <property type="term" value="F:oxygen carrier activity"/>
    <property type="evidence" value="ECO:0007669"/>
    <property type="project" value="UniProtKB-KW"/>
</dbReference>
<dbReference type="GO" id="GO:0004601">
    <property type="term" value="F:peroxidase activity"/>
    <property type="evidence" value="ECO:0007669"/>
    <property type="project" value="TreeGrafter"/>
</dbReference>
<dbReference type="GO" id="GO:0042744">
    <property type="term" value="P:hydrogen peroxide catabolic process"/>
    <property type="evidence" value="ECO:0007669"/>
    <property type="project" value="TreeGrafter"/>
</dbReference>
<dbReference type="CDD" id="cd08927">
    <property type="entry name" value="Hb-alpha-like"/>
    <property type="match status" value="1"/>
</dbReference>
<dbReference type="FunFam" id="1.10.490.10:FF:000002">
    <property type="entry name" value="Hemoglobin subunit alpha"/>
    <property type="match status" value="1"/>
</dbReference>
<dbReference type="Gene3D" id="1.10.490.10">
    <property type="entry name" value="Globins"/>
    <property type="match status" value="1"/>
</dbReference>
<dbReference type="InterPro" id="IPR000971">
    <property type="entry name" value="Globin"/>
</dbReference>
<dbReference type="InterPro" id="IPR009050">
    <property type="entry name" value="Globin-like_sf"/>
</dbReference>
<dbReference type="InterPro" id="IPR012292">
    <property type="entry name" value="Globin/Proto"/>
</dbReference>
<dbReference type="InterPro" id="IPR002338">
    <property type="entry name" value="Hemoglobin_a-typ"/>
</dbReference>
<dbReference type="InterPro" id="IPR050056">
    <property type="entry name" value="Hemoglobin_oxygen_transport"/>
</dbReference>
<dbReference type="InterPro" id="IPR002339">
    <property type="entry name" value="Hemoglobin_pi"/>
</dbReference>
<dbReference type="PANTHER" id="PTHR11442">
    <property type="entry name" value="HEMOGLOBIN FAMILY MEMBER"/>
    <property type="match status" value="1"/>
</dbReference>
<dbReference type="PANTHER" id="PTHR11442:SF48">
    <property type="entry name" value="HEMOGLOBIN SUBUNIT ALPHA"/>
    <property type="match status" value="1"/>
</dbReference>
<dbReference type="Pfam" id="PF00042">
    <property type="entry name" value="Globin"/>
    <property type="match status" value="1"/>
</dbReference>
<dbReference type="PRINTS" id="PR00612">
    <property type="entry name" value="ALPHAHAEM"/>
</dbReference>
<dbReference type="PRINTS" id="PR00815">
    <property type="entry name" value="PIHAEM"/>
</dbReference>
<dbReference type="SUPFAM" id="SSF46458">
    <property type="entry name" value="Globin-like"/>
    <property type="match status" value="1"/>
</dbReference>
<dbReference type="PROSITE" id="PS01033">
    <property type="entry name" value="GLOBIN"/>
    <property type="match status" value="1"/>
</dbReference>
<keyword id="KW-0903">Direct protein sequencing</keyword>
<keyword id="KW-0349">Heme</keyword>
<keyword id="KW-0408">Iron</keyword>
<keyword id="KW-0479">Metal-binding</keyword>
<keyword id="KW-0561">Oxygen transport</keyword>
<keyword id="KW-0813">Transport</keyword>
<accession>P15162</accession>
<feature type="initiator methionine" description="Removed" evidence="1">
    <location>
        <position position="1"/>
    </location>
</feature>
<feature type="chain" id="PRO_0000052556" description="Hemoglobin subunit alpha-A">
    <location>
        <begin position="2"/>
        <end position="142"/>
    </location>
</feature>
<feature type="domain" description="Globin" evidence="2">
    <location>
        <begin position="2"/>
        <end position="142"/>
    </location>
</feature>
<feature type="binding site" evidence="2">
    <location>
        <position position="59"/>
    </location>
    <ligand>
        <name>O2</name>
        <dbReference type="ChEBI" id="CHEBI:15379"/>
    </ligand>
</feature>
<feature type="binding site" description="proximal binding residue" evidence="2">
    <location>
        <position position="88"/>
    </location>
    <ligand>
        <name>heme b</name>
        <dbReference type="ChEBI" id="CHEBI:60344"/>
    </ligand>
    <ligandPart>
        <name>Fe</name>
        <dbReference type="ChEBI" id="CHEBI:18248"/>
    </ligandPart>
</feature>